<reference key="1">
    <citation type="journal article" date="2005" name="Nature">
        <title>Sequencing of Aspergillus nidulans and comparative analysis with A. fumigatus and A. oryzae.</title>
        <authorList>
            <person name="Galagan J.E."/>
            <person name="Calvo S.E."/>
            <person name="Cuomo C."/>
            <person name="Ma L.-J."/>
            <person name="Wortman J.R."/>
            <person name="Batzoglou S."/>
            <person name="Lee S.-I."/>
            <person name="Bastuerkmen M."/>
            <person name="Spevak C.C."/>
            <person name="Clutterbuck J."/>
            <person name="Kapitonov V."/>
            <person name="Jurka J."/>
            <person name="Scazzocchio C."/>
            <person name="Farman M.L."/>
            <person name="Butler J."/>
            <person name="Purcell S."/>
            <person name="Harris S."/>
            <person name="Braus G.H."/>
            <person name="Draht O."/>
            <person name="Busch S."/>
            <person name="D'Enfert C."/>
            <person name="Bouchier C."/>
            <person name="Goldman G.H."/>
            <person name="Bell-Pedersen D."/>
            <person name="Griffiths-Jones S."/>
            <person name="Doonan J.H."/>
            <person name="Yu J."/>
            <person name="Vienken K."/>
            <person name="Pain A."/>
            <person name="Freitag M."/>
            <person name="Selker E.U."/>
            <person name="Archer D.B."/>
            <person name="Penalva M.A."/>
            <person name="Oakley B.R."/>
            <person name="Momany M."/>
            <person name="Tanaka T."/>
            <person name="Kumagai T."/>
            <person name="Asai K."/>
            <person name="Machida M."/>
            <person name="Nierman W.C."/>
            <person name="Denning D.W."/>
            <person name="Caddick M.X."/>
            <person name="Hynes M."/>
            <person name="Paoletti M."/>
            <person name="Fischer R."/>
            <person name="Miller B.L."/>
            <person name="Dyer P.S."/>
            <person name="Sachs M.S."/>
            <person name="Osmani S.A."/>
            <person name="Birren B.W."/>
        </authorList>
    </citation>
    <scope>NUCLEOTIDE SEQUENCE [LARGE SCALE GENOMIC DNA]</scope>
    <source>
        <strain>FGSC A4 / ATCC 38163 / CBS 112.46 / NRRL 194 / M139</strain>
    </source>
</reference>
<reference key="2">
    <citation type="journal article" date="2009" name="Fungal Genet. Biol.">
        <title>The 2008 update of the Aspergillus nidulans genome annotation: a community effort.</title>
        <authorList>
            <person name="Wortman J.R."/>
            <person name="Gilsenan J.M."/>
            <person name="Joardar V."/>
            <person name="Deegan J."/>
            <person name="Clutterbuck J."/>
            <person name="Andersen M.R."/>
            <person name="Archer D."/>
            <person name="Bencina M."/>
            <person name="Braus G."/>
            <person name="Coutinho P."/>
            <person name="von Dohren H."/>
            <person name="Doonan J."/>
            <person name="Driessen A.J."/>
            <person name="Durek P."/>
            <person name="Espeso E."/>
            <person name="Fekete E."/>
            <person name="Flipphi M."/>
            <person name="Estrada C.G."/>
            <person name="Geysens S."/>
            <person name="Goldman G."/>
            <person name="de Groot P.W."/>
            <person name="Hansen K."/>
            <person name="Harris S.D."/>
            <person name="Heinekamp T."/>
            <person name="Helmstaedt K."/>
            <person name="Henrissat B."/>
            <person name="Hofmann G."/>
            <person name="Homan T."/>
            <person name="Horio T."/>
            <person name="Horiuchi H."/>
            <person name="James S."/>
            <person name="Jones M."/>
            <person name="Karaffa L."/>
            <person name="Karanyi Z."/>
            <person name="Kato M."/>
            <person name="Keller N."/>
            <person name="Kelly D.E."/>
            <person name="Kiel J.A."/>
            <person name="Kim J.M."/>
            <person name="van der Klei I.J."/>
            <person name="Klis F.M."/>
            <person name="Kovalchuk A."/>
            <person name="Krasevec N."/>
            <person name="Kubicek C.P."/>
            <person name="Liu B."/>
            <person name="Maccabe A."/>
            <person name="Meyer V."/>
            <person name="Mirabito P."/>
            <person name="Miskei M."/>
            <person name="Mos M."/>
            <person name="Mullins J."/>
            <person name="Nelson D.R."/>
            <person name="Nielsen J."/>
            <person name="Oakley B.R."/>
            <person name="Osmani S.A."/>
            <person name="Pakula T."/>
            <person name="Paszewski A."/>
            <person name="Paulsen I."/>
            <person name="Pilsyk S."/>
            <person name="Pocsi I."/>
            <person name="Punt P.J."/>
            <person name="Ram A.F."/>
            <person name="Ren Q."/>
            <person name="Robellet X."/>
            <person name="Robson G."/>
            <person name="Seiboth B."/>
            <person name="van Solingen P."/>
            <person name="Specht T."/>
            <person name="Sun J."/>
            <person name="Taheri-Talesh N."/>
            <person name="Takeshita N."/>
            <person name="Ussery D."/>
            <person name="vanKuyk P.A."/>
            <person name="Visser H."/>
            <person name="van de Vondervoort P.J."/>
            <person name="de Vries R.P."/>
            <person name="Walton J."/>
            <person name="Xiang X."/>
            <person name="Xiong Y."/>
            <person name="Zeng A.P."/>
            <person name="Brandt B.W."/>
            <person name="Cornell M.J."/>
            <person name="van den Hondel C.A."/>
            <person name="Visser J."/>
            <person name="Oliver S.G."/>
            <person name="Turner G."/>
        </authorList>
    </citation>
    <scope>GENOME REANNOTATION</scope>
    <source>
        <strain>FGSC A4 / ATCC 38163 / CBS 112.46 / NRRL 194 / M139</strain>
    </source>
</reference>
<evidence type="ECO:0000250" key="1"/>
<evidence type="ECO:0000255" key="2">
    <source>
        <dbReference type="PROSITE-ProRule" id="PRU00541"/>
    </source>
</evidence>
<evidence type="ECO:0000255" key="3">
    <source>
        <dbReference type="PROSITE-ProRule" id="PRU00542"/>
    </source>
</evidence>
<evidence type="ECO:0000256" key="4">
    <source>
        <dbReference type="SAM" id="MobiDB-lite"/>
    </source>
</evidence>
<evidence type="ECO:0000305" key="5"/>
<comment type="function">
    <text evidence="1">ATP-binding RNA helicase involved in the biogenesis of 60S ribosomal subunits and is required for the normal formation of 25S and 5.8S rRNAs.</text>
</comment>
<comment type="catalytic activity">
    <reaction>
        <text>ATP + H2O = ADP + phosphate + H(+)</text>
        <dbReference type="Rhea" id="RHEA:13065"/>
        <dbReference type="ChEBI" id="CHEBI:15377"/>
        <dbReference type="ChEBI" id="CHEBI:15378"/>
        <dbReference type="ChEBI" id="CHEBI:30616"/>
        <dbReference type="ChEBI" id="CHEBI:43474"/>
        <dbReference type="ChEBI" id="CHEBI:456216"/>
        <dbReference type="EC" id="3.6.4.13"/>
    </reaction>
</comment>
<comment type="subcellular location">
    <subcellularLocation>
        <location evidence="1">Nucleus</location>
        <location evidence="1">Nucleolus</location>
    </subcellularLocation>
</comment>
<comment type="domain">
    <text>The Q motif is unique to and characteristic of the DEAD box family of RNA helicases and controls ATP binding and hydrolysis.</text>
</comment>
<comment type="similarity">
    <text evidence="5">Belongs to the DEAD box helicase family. DDX56/DBP9 subfamily.</text>
</comment>
<sequence length="610" mass="68086">MKRKLDANDVPSTEANEAEEVKGADRDEDFETLNLDPRLRQALVKEKFSKPTPVQAKAIPLALEGKDILARAKTGSGKTAAYVLPILQTILQKKAIDPSMKATTGLILVPTRELAEQVQKVITTFAAFCGKDVRSVNLTQKVSDAVQKAMLADYPDIVVSTPARVIANLGTSALSLENLTHLVIDEADLVLSYGYEDDINALSKAIPRGVQTFLMSATLTAEVDTLKGLFCRSPVILKLEDKDDHGAGVSQFVVKCAEDEKFLLTYVIFKLQLIKGKVIIFVGDIDRSYRLKLFLEQFGIKSCILNSELPVNSRIHVVEEFNKGVYDIIIAADEQEVLGVSKSRKSKDATEGDDELLSDEDEETSAKAASTRTDKRRKLSSKEKDYGISRGIDFQNVACVLNFDLPTSSKSYTHRIGRTGRGGKTGMALSFVIPADKYGKHKPTSISSAKHDEAVLAKIIKRQAKLGHEVKPYHFDMTQVDAFRYRMSDALRAITRLAIQEARAREIRQELVKSEKLKRHFEENPEELRQLRHDGELRAARIQPHLKHIPEYLMPAKGKKGISNEDVGFVSLRKTGPENRIRKARDRNRGRGKKPGRKIDPLKTFNRGRK</sequence>
<dbReference type="EC" id="3.6.4.13"/>
<dbReference type="EMBL" id="AACD01000107">
    <property type="protein sequence ID" value="EAA58758.1"/>
    <property type="molecule type" value="Genomic_DNA"/>
</dbReference>
<dbReference type="EMBL" id="BN001301">
    <property type="protein sequence ID" value="CBF69600.1"/>
    <property type="molecule type" value="Genomic_DNA"/>
</dbReference>
<dbReference type="RefSeq" id="XP_663978.1">
    <property type="nucleotide sequence ID" value="XM_658886.1"/>
</dbReference>
<dbReference type="SMR" id="Q5AZA6"/>
<dbReference type="FunCoup" id="Q5AZA6">
    <property type="interactions" value="941"/>
</dbReference>
<dbReference type="STRING" id="227321.Q5AZA6"/>
<dbReference type="EnsemblFungi" id="CBF69600">
    <property type="protein sequence ID" value="CBF69600"/>
    <property type="gene ID" value="ANIA_06374"/>
</dbReference>
<dbReference type="KEGG" id="ani:ANIA_06374"/>
<dbReference type="VEuPathDB" id="FungiDB:AN6374"/>
<dbReference type="eggNOG" id="KOG0346">
    <property type="taxonomic scope" value="Eukaryota"/>
</dbReference>
<dbReference type="HOGENOM" id="CLU_003041_17_1_1"/>
<dbReference type="InParanoid" id="Q5AZA6"/>
<dbReference type="OMA" id="NASEQCV"/>
<dbReference type="OrthoDB" id="1191041at2759"/>
<dbReference type="Proteomes" id="UP000000560">
    <property type="component" value="Chromosome I"/>
</dbReference>
<dbReference type="GO" id="GO:0005730">
    <property type="term" value="C:nucleolus"/>
    <property type="evidence" value="ECO:0000318"/>
    <property type="project" value="GO_Central"/>
</dbReference>
<dbReference type="GO" id="GO:0005524">
    <property type="term" value="F:ATP binding"/>
    <property type="evidence" value="ECO:0007669"/>
    <property type="project" value="UniProtKB-KW"/>
</dbReference>
<dbReference type="GO" id="GO:0016887">
    <property type="term" value="F:ATP hydrolysis activity"/>
    <property type="evidence" value="ECO:0007669"/>
    <property type="project" value="RHEA"/>
</dbReference>
<dbReference type="GO" id="GO:0003678">
    <property type="term" value="F:DNA helicase activity"/>
    <property type="evidence" value="ECO:0007669"/>
    <property type="project" value="EnsemblFungi"/>
</dbReference>
<dbReference type="GO" id="GO:0033677">
    <property type="term" value="F:DNA/RNA helicase activity"/>
    <property type="evidence" value="ECO:0007669"/>
    <property type="project" value="EnsemblFungi"/>
</dbReference>
<dbReference type="GO" id="GO:0003723">
    <property type="term" value="F:RNA binding"/>
    <property type="evidence" value="ECO:0007669"/>
    <property type="project" value="UniProtKB-KW"/>
</dbReference>
<dbReference type="GO" id="GO:0003724">
    <property type="term" value="F:RNA helicase activity"/>
    <property type="evidence" value="ECO:0007669"/>
    <property type="project" value="UniProtKB-EC"/>
</dbReference>
<dbReference type="GO" id="GO:0000463">
    <property type="term" value="P:maturation of LSU-rRNA from tricistronic rRNA transcript (SSU-rRNA, 5.8S rRNA, LSU-rRNA)"/>
    <property type="evidence" value="ECO:0007669"/>
    <property type="project" value="EnsemblFungi"/>
</dbReference>
<dbReference type="CDD" id="cd17961">
    <property type="entry name" value="DEADc_DDX56"/>
    <property type="match status" value="1"/>
</dbReference>
<dbReference type="CDD" id="cd18787">
    <property type="entry name" value="SF2_C_DEAD"/>
    <property type="match status" value="1"/>
</dbReference>
<dbReference type="Gene3D" id="3.40.50.300">
    <property type="entry name" value="P-loop containing nucleotide triphosphate hydrolases"/>
    <property type="match status" value="2"/>
</dbReference>
<dbReference type="InterPro" id="IPR011545">
    <property type="entry name" value="DEAD/DEAH_box_helicase_dom"/>
</dbReference>
<dbReference type="InterPro" id="IPR050079">
    <property type="entry name" value="DEAD_box_RNA_helicase"/>
</dbReference>
<dbReference type="InterPro" id="IPR014001">
    <property type="entry name" value="Helicase_ATP-bd"/>
</dbReference>
<dbReference type="InterPro" id="IPR001650">
    <property type="entry name" value="Helicase_C-like"/>
</dbReference>
<dbReference type="InterPro" id="IPR027417">
    <property type="entry name" value="P-loop_NTPase"/>
</dbReference>
<dbReference type="InterPro" id="IPR014014">
    <property type="entry name" value="RNA_helicase_DEAD_Q_motif"/>
</dbReference>
<dbReference type="PANTHER" id="PTHR47959">
    <property type="entry name" value="ATP-DEPENDENT RNA HELICASE RHLE-RELATED"/>
    <property type="match status" value="1"/>
</dbReference>
<dbReference type="PANTHER" id="PTHR47959:SF21">
    <property type="entry name" value="DEAD-BOX HELICASE 56"/>
    <property type="match status" value="1"/>
</dbReference>
<dbReference type="Pfam" id="PF00270">
    <property type="entry name" value="DEAD"/>
    <property type="match status" value="1"/>
</dbReference>
<dbReference type="Pfam" id="PF00271">
    <property type="entry name" value="Helicase_C"/>
    <property type="match status" value="2"/>
</dbReference>
<dbReference type="SMART" id="SM00487">
    <property type="entry name" value="DEXDc"/>
    <property type="match status" value="1"/>
</dbReference>
<dbReference type="SMART" id="SM00490">
    <property type="entry name" value="HELICc"/>
    <property type="match status" value="1"/>
</dbReference>
<dbReference type="SUPFAM" id="SSF52540">
    <property type="entry name" value="P-loop containing nucleoside triphosphate hydrolases"/>
    <property type="match status" value="2"/>
</dbReference>
<dbReference type="PROSITE" id="PS51192">
    <property type="entry name" value="HELICASE_ATP_BIND_1"/>
    <property type="match status" value="1"/>
</dbReference>
<dbReference type="PROSITE" id="PS51194">
    <property type="entry name" value="HELICASE_CTER"/>
    <property type="match status" value="1"/>
</dbReference>
<dbReference type="PROSITE" id="PS51195">
    <property type="entry name" value="Q_MOTIF"/>
    <property type="match status" value="1"/>
</dbReference>
<keyword id="KW-0067">ATP-binding</keyword>
<keyword id="KW-0347">Helicase</keyword>
<keyword id="KW-0378">Hydrolase</keyword>
<keyword id="KW-0547">Nucleotide-binding</keyword>
<keyword id="KW-0539">Nucleus</keyword>
<keyword id="KW-1185">Reference proteome</keyword>
<keyword id="KW-0690">Ribosome biogenesis</keyword>
<keyword id="KW-0694">RNA-binding</keyword>
<keyword id="KW-0698">rRNA processing</keyword>
<accession>Q5AZA6</accession>
<accession>C8V0R7</accession>
<feature type="chain" id="PRO_0000232341" description="ATP-dependent RNA helicase dbp9">
    <location>
        <begin position="1"/>
        <end position="610"/>
    </location>
</feature>
<feature type="domain" description="Helicase ATP-binding" evidence="2">
    <location>
        <begin position="59"/>
        <end position="237"/>
    </location>
</feature>
<feature type="domain" description="Helicase C-terminal" evidence="3">
    <location>
        <begin position="248"/>
        <end position="478"/>
    </location>
</feature>
<feature type="region of interest" description="Disordered" evidence="4">
    <location>
        <begin position="1"/>
        <end position="30"/>
    </location>
</feature>
<feature type="region of interest" description="Disordered" evidence="4">
    <location>
        <begin position="349"/>
        <end position="380"/>
    </location>
</feature>
<feature type="region of interest" description="Disordered" evidence="4">
    <location>
        <begin position="569"/>
        <end position="610"/>
    </location>
</feature>
<feature type="short sequence motif" description="Q motif">
    <location>
        <begin position="28"/>
        <end position="56"/>
    </location>
</feature>
<feature type="short sequence motif" description="DEAD box">
    <location>
        <begin position="185"/>
        <end position="188"/>
    </location>
</feature>
<feature type="compositionally biased region" description="Acidic residues" evidence="4">
    <location>
        <begin position="351"/>
        <end position="363"/>
    </location>
</feature>
<feature type="compositionally biased region" description="Basic residues" evidence="4">
    <location>
        <begin position="582"/>
        <end position="596"/>
    </location>
</feature>
<feature type="binding site" evidence="2">
    <location>
        <begin position="72"/>
        <end position="79"/>
    </location>
    <ligand>
        <name>ATP</name>
        <dbReference type="ChEBI" id="CHEBI:30616"/>
    </ligand>
</feature>
<organism>
    <name type="scientific">Emericella nidulans (strain FGSC A4 / ATCC 38163 / CBS 112.46 / NRRL 194 / M139)</name>
    <name type="common">Aspergillus nidulans</name>
    <dbReference type="NCBI Taxonomy" id="227321"/>
    <lineage>
        <taxon>Eukaryota</taxon>
        <taxon>Fungi</taxon>
        <taxon>Dikarya</taxon>
        <taxon>Ascomycota</taxon>
        <taxon>Pezizomycotina</taxon>
        <taxon>Eurotiomycetes</taxon>
        <taxon>Eurotiomycetidae</taxon>
        <taxon>Eurotiales</taxon>
        <taxon>Aspergillaceae</taxon>
        <taxon>Aspergillus</taxon>
        <taxon>Aspergillus subgen. Nidulantes</taxon>
    </lineage>
</organism>
<protein>
    <recommendedName>
        <fullName>ATP-dependent RNA helicase dbp9</fullName>
        <ecNumber>3.6.4.13</ecNumber>
    </recommendedName>
</protein>
<name>DBP9_EMENI</name>
<gene>
    <name type="primary">dbp9</name>
    <name type="ORF">AN6374</name>
</gene>
<proteinExistence type="inferred from homology"/>